<organism>
    <name type="scientific">Xylella fastidiosa (strain Temecula1 / ATCC 700964)</name>
    <dbReference type="NCBI Taxonomy" id="183190"/>
    <lineage>
        <taxon>Bacteria</taxon>
        <taxon>Pseudomonadati</taxon>
        <taxon>Pseudomonadota</taxon>
        <taxon>Gammaproteobacteria</taxon>
        <taxon>Lysobacterales</taxon>
        <taxon>Lysobacteraceae</taxon>
        <taxon>Xylella</taxon>
    </lineage>
</organism>
<protein>
    <recommendedName>
        <fullName evidence="1">tRNA-dihydrouridine(20/20a) synthase</fullName>
        <ecNumber evidence="1">1.3.1.-</ecNumber>
        <ecNumber evidence="1">1.3.1.91</ecNumber>
    </recommendedName>
    <alternativeName>
        <fullName evidence="1">U20-specific dihydrouridine synthase</fullName>
        <shortName evidence="1">U20-specific Dus</shortName>
    </alternativeName>
    <alternativeName>
        <fullName evidence="1">tRNA-dihydrouridine synthase A</fullName>
    </alternativeName>
</protein>
<dbReference type="EC" id="1.3.1.-" evidence="1"/>
<dbReference type="EC" id="1.3.1.91" evidence="1"/>
<dbReference type="EMBL" id="AE009442">
    <property type="protein sequence ID" value="AAO29519.1"/>
    <property type="molecule type" value="Genomic_DNA"/>
</dbReference>
<dbReference type="RefSeq" id="WP_011098205.1">
    <property type="nucleotide sequence ID" value="NC_004556.1"/>
</dbReference>
<dbReference type="SMR" id="Q87AY2"/>
<dbReference type="GeneID" id="93905517"/>
<dbReference type="KEGG" id="xft:PD_1681"/>
<dbReference type="HOGENOM" id="CLU_013299_2_1_6"/>
<dbReference type="Proteomes" id="UP000002516">
    <property type="component" value="Chromosome"/>
</dbReference>
<dbReference type="GO" id="GO:0050660">
    <property type="term" value="F:flavin adenine dinucleotide binding"/>
    <property type="evidence" value="ECO:0007669"/>
    <property type="project" value="InterPro"/>
</dbReference>
<dbReference type="GO" id="GO:0010181">
    <property type="term" value="F:FMN binding"/>
    <property type="evidence" value="ECO:0007669"/>
    <property type="project" value="UniProtKB-UniRule"/>
</dbReference>
<dbReference type="GO" id="GO:0000049">
    <property type="term" value="F:tRNA binding"/>
    <property type="evidence" value="ECO:0007669"/>
    <property type="project" value="UniProtKB-UniRule"/>
</dbReference>
<dbReference type="GO" id="GO:0102264">
    <property type="term" value="F:tRNA-dihydrouridine20 synthase activity"/>
    <property type="evidence" value="ECO:0007669"/>
    <property type="project" value="UniProtKB-EC"/>
</dbReference>
<dbReference type="GO" id="GO:0102266">
    <property type="term" value="F:tRNA-dihydrouridine20a synthase activity"/>
    <property type="evidence" value="ECO:0007669"/>
    <property type="project" value="RHEA"/>
</dbReference>
<dbReference type="CDD" id="cd02801">
    <property type="entry name" value="DUS_like_FMN"/>
    <property type="match status" value="1"/>
</dbReference>
<dbReference type="Gene3D" id="1.20.120.1460">
    <property type="match status" value="1"/>
</dbReference>
<dbReference type="Gene3D" id="3.20.20.70">
    <property type="entry name" value="Aldolase class I"/>
    <property type="match status" value="1"/>
</dbReference>
<dbReference type="HAMAP" id="MF_02041">
    <property type="entry name" value="DusA_subfam"/>
    <property type="match status" value="1"/>
</dbReference>
<dbReference type="InterPro" id="IPR013785">
    <property type="entry name" value="Aldolase_TIM"/>
</dbReference>
<dbReference type="InterPro" id="IPR035587">
    <property type="entry name" value="DUS-like_FMN-bd"/>
</dbReference>
<dbReference type="InterPro" id="IPR001269">
    <property type="entry name" value="DUS_fam"/>
</dbReference>
<dbReference type="InterPro" id="IPR004653">
    <property type="entry name" value="DusA"/>
</dbReference>
<dbReference type="InterPro" id="IPR018517">
    <property type="entry name" value="tRNA_hU_synthase_CS"/>
</dbReference>
<dbReference type="NCBIfam" id="NF008774">
    <property type="entry name" value="PRK11815.1"/>
    <property type="match status" value="1"/>
</dbReference>
<dbReference type="PANTHER" id="PTHR42907">
    <property type="entry name" value="FMN-LINKED OXIDOREDUCTASES SUPERFAMILY PROTEIN"/>
    <property type="match status" value="1"/>
</dbReference>
<dbReference type="PANTHER" id="PTHR42907:SF1">
    <property type="entry name" value="FMN-LINKED OXIDOREDUCTASES SUPERFAMILY PROTEIN"/>
    <property type="match status" value="1"/>
</dbReference>
<dbReference type="Pfam" id="PF01207">
    <property type="entry name" value="Dus"/>
    <property type="match status" value="1"/>
</dbReference>
<dbReference type="PIRSF" id="PIRSF006621">
    <property type="entry name" value="Dus"/>
    <property type="match status" value="1"/>
</dbReference>
<dbReference type="SUPFAM" id="SSF51395">
    <property type="entry name" value="FMN-linked oxidoreductases"/>
    <property type="match status" value="1"/>
</dbReference>
<dbReference type="PROSITE" id="PS01136">
    <property type="entry name" value="UPF0034"/>
    <property type="match status" value="1"/>
</dbReference>
<comment type="function">
    <text evidence="1">Catalyzes the synthesis of 5,6-dihydrouridine (D), a modified base found in the D-loop of most tRNAs, via the reduction of the C5-C6 double bond in target uridines. Specifically modifies U20 and U20a in tRNAs.</text>
</comment>
<comment type="catalytic activity">
    <reaction evidence="1">
        <text>5,6-dihydrouridine(20) in tRNA + NADP(+) = uridine(20) in tRNA + NADPH + H(+)</text>
        <dbReference type="Rhea" id="RHEA:53336"/>
        <dbReference type="Rhea" id="RHEA-COMP:13533"/>
        <dbReference type="Rhea" id="RHEA-COMP:13534"/>
        <dbReference type="ChEBI" id="CHEBI:15378"/>
        <dbReference type="ChEBI" id="CHEBI:57783"/>
        <dbReference type="ChEBI" id="CHEBI:58349"/>
        <dbReference type="ChEBI" id="CHEBI:65315"/>
        <dbReference type="ChEBI" id="CHEBI:74443"/>
        <dbReference type="EC" id="1.3.1.91"/>
    </reaction>
</comment>
<comment type="catalytic activity">
    <reaction evidence="1">
        <text>5,6-dihydrouridine(20) in tRNA + NAD(+) = uridine(20) in tRNA + NADH + H(+)</text>
        <dbReference type="Rhea" id="RHEA:53340"/>
        <dbReference type="Rhea" id="RHEA-COMP:13533"/>
        <dbReference type="Rhea" id="RHEA-COMP:13534"/>
        <dbReference type="ChEBI" id="CHEBI:15378"/>
        <dbReference type="ChEBI" id="CHEBI:57540"/>
        <dbReference type="ChEBI" id="CHEBI:57945"/>
        <dbReference type="ChEBI" id="CHEBI:65315"/>
        <dbReference type="ChEBI" id="CHEBI:74443"/>
        <dbReference type="EC" id="1.3.1.91"/>
    </reaction>
</comment>
<comment type="catalytic activity">
    <reaction evidence="1">
        <text>5,6-dihydrouridine(20a) in tRNA + NADP(+) = uridine(20a) in tRNA + NADPH + H(+)</text>
        <dbReference type="Rhea" id="RHEA:53344"/>
        <dbReference type="Rhea" id="RHEA-COMP:13535"/>
        <dbReference type="Rhea" id="RHEA-COMP:13536"/>
        <dbReference type="ChEBI" id="CHEBI:15378"/>
        <dbReference type="ChEBI" id="CHEBI:57783"/>
        <dbReference type="ChEBI" id="CHEBI:58349"/>
        <dbReference type="ChEBI" id="CHEBI:65315"/>
        <dbReference type="ChEBI" id="CHEBI:74443"/>
    </reaction>
</comment>
<comment type="catalytic activity">
    <reaction evidence="1">
        <text>5,6-dihydrouridine(20a) in tRNA + NAD(+) = uridine(20a) in tRNA + NADH + H(+)</text>
        <dbReference type="Rhea" id="RHEA:53348"/>
        <dbReference type="Rhea" id="RHEA-COMP:13535"/>
        <dbReference type="Rhea" id="RHEA-COMP:13536"/>
        <dbReference type="ChEBI" id="CHEBI:15378"/>
        <dbReference type="ChEBI" id="CHEBI:57540"/>
        <dbReference type="ChEBI" id="CHEBI:57945"/>
        <dbReference type="ChEBI" id="CHEBI:65315"/>
        <dbReference type="ChEBI" id="CHEBI:74443"/>
    </reaction>
</comment>
<comment type="cofactor">
    <cofactor evidence="1">
        <name>FMN</name>
        <dbReference type="ChEBI" id="CHEBI:58210"/>
    </cofactor>
</comment>
<comment type="similarity">
    <text evidence="1">Belongs to the Dus family. DusA subfamily.</text>
</comment>
<gene>
    <name evidence="1" type="primary">dusA</name>
    <name type="ordered locus">PD_1681</name>
</gene>
<keyword id="KW-0285">Flavoprotein</keyword>
<keyword id="KW-0288">FMN</keyword>
<keyword id="KW-0521">NADP</keyword>
<keyword id="KW-0560">Oxidoreductase</keyword>
<keyword id="KW-1185">Reference proteome</keyword>
<keyword id="KW-0694">RNA-binding</keyword>
<keyword id="KW-0819">tRNA processing</keyword>
<keyword id="KW-0820">tRNA-binding</keyword>
<accession>Q87AY2</accession>
<name>DUSA_XYLFT</name>
<sequence length="332" mass="36653">MIPVINQEKQGISGDFRLSVAPMMNWTDRYCRVFHRVLAPSARLYTEMVHAKAVIYGDRERLLGFASVEQPVALQLGGSEPALLAKAASIAVDWGYSEINLNCGCPSDRVQAGSFGACLMREPALVADCVAAMAAVVSVPVTVKCRLGVNEDDDYGRFAKFVDWVIGASSSRMIVVHARNAWLQGLSPKENREIPPLRYDWVYRLKRECPELAVVLNGGITSVEAGLDHLLMVDGVMLGRAAYQDPYILHQFYCALSNAPVLPRALLLRALRPYVEAWLEQGVTLRHIVRHLLGLFHGQPGGRVFRQVLTQGGQRSDADWSLVEQALSIIEG</sequence>
<evidence type="ECO:0000255" key="1">
    <source>
        <dbReference type="HAMAP-Rule" id="MF_02041"/>
    </source>
</evidence>
<proteinExistence type="inferred from homology"/>
<feature type="chain" id="PRO_0000162082" description="tRNA-dihydrouridine(20/20a) synthase">
    <location>
        <begin position="1"/>
        <end position="332"/>
    </location>
</feature>
<feature type="active site" description="Proton donor" evidence="1">
    <location>
        <position position="105"/>
    </location>
</feature>
<feature type="binding site" evidence="1">
    <location>
        <begin position="22"/>
        <end position="24"/>
    </location>
    <ligand>
        <name>FMN</name>
        <dbReference type="ChEBI" id="CHEBI:58210"/>
    </ligand>
</feature>
<feature type="binding site" evidence="1">
    <location>
        <position position="75"/>
    </location>
    <ligand>
        <name>FMN</name>
        <dbReference type="ChEBI" id="CHEBI:58210"/>
    </ligand>
</feature>
<feature type="binding site" evidence="1">
    <location>
        <position position="144"/>
    </location>
    <ligand>
        <name>FMN</name>
        <dbReference type="ChEBI" id="CHEBI:58210"/>
    </ligand>
</feature>
<feature type="binding site" evidence="1">
    <location>
        <position position="177"/>
    </location>
    <ligand>
        <name>FMN</name>
        <dbReference type="ChEBI" id="CHEBI:58210"/>
    </ligand>
</feature>
<feature type="binding site" evidence="1">
    <location>
        <begin position="217"/>
        <end position="219"/>
    </location>
    <ligand>
        <name>FMN</name>
        <dbReference type="ChEBI" id="CHEBI:58210"/>
    </ligand>
</feature>
<feature type="binding site" evidence="1">
    <location>
        <begin position="239"/>
        <end position="240"/>
    </location>
    <ligand>
        <name>FMN</name>
        <dbReference type="ChEBI" id="CHEBI:58210"/>
    </ligand>
</feature>
<feature type="site" description="Interacts with tRNA" evidence="1">
    <location>
        <position position="102"/>
    </location>
</feature>
<feature type="site" description="Interacts with tRNA; defines subfamily-specific binding signature" evidence="1">
    <location>
        <position position="189"/>
    </location>
</feature>
<feature type="site" description="Interacts with tRNA" evidence="1">
    <location>
        <position position="192"/>
    </location>
</feature>
<feature type="site" description="Interacts with tRNA; defines subfamily-specific binding signature" evidence="1">
    <location>
        <position position="303"/>
    </location>
</feature>
<feature type="site" description="Interacts with tRNA; defines subfamily-specific binding signature" evidence="1">
    <location>
        <position position="306"/>
    </location>
</feature>
<reference key="1">
    <citation type="journal article" date="2003" name="J. Bacteriol.">
        <title>Comparative analyses of the complete genome sequences of Pierce's disease and citrus variegated chlorosis strains of Xylella fastidiosa.</title>
        <authorList>
            <person name="Van Sluys M.A."/>
            <person name="de Oliveira M.C."/>
            <person name="Monteiro-Vitorello C.B."/>
            <person name="Miyaki C.Y."/>
            <person name="Furlan L.R."/>
            <person name="Camargo L.E.A."/>
            <person name="da Silva A.C.R."/>
            <person name="Moon D.H."/>
            <person name="Takita M.A."/>
            <person name="Lemos E.G.M."/>
            <person name="Machado M.A."/>
            <person name="Ferro M.I.T."/>
            <person name="da Silva F.R."/>
            <person name="Goldman M.H.S."/>
            <person name="Goldman G.H."/>
            <person name="Lemos M.V.F."/>
            <person name="El-Dorry H."/>
            <person name="Tsai S.M."/>
            <person name="Carrer H."/>
            <person name="Carraro D.M."/>
            <person name="de Oliveira R.C."/>
            <person name="Nunes L.R."/>
            <person name="Siqueira W.J."/>
            <person name="Coutinho L.L."/>
            <person name="Kimura E.T."/>
            <person name="Ferro E.S."/>
            <person name="Harakava R."/>
            <person name="Kuramae E.E."/>
            <person name="Marino C.L."/>
            <person name="Giglioti E."/>
            <person name="Abreu I.L."/>
            <person name="Alves L.M.C."/>
            <person name="do Amaral A.M."/>
            <person name="Baia G.S."/>
            <person name="Blanco S.R."/>
            <person name="Brito M.S."/>
            <person name="Cannavan F.S."/>
            <person name="Celestino A.V."/>
            <person name="da Cunha A.F."/>
            <person name="Fenille R.C."/>
            <person name="Ferro J.A."/>
            <person name="Formighieri E.F."/>
            <person name="Kishi L.T."/>
            <person name="Leoni S.G."/>
            <person name="Oliveira A.R."/>
            <person name="Rosa V.E. Jr."/>
            <person name="Sassaki F.T."/>
            <person name="Sena J.A.D."/>
            <person name="de Souza A.A."/>
            <person name="Truffi D."/>
            <person name="Tsukumo F."/>
            <person name="Yanai G.M."/>
            <person name="Zaros L.G."/>
            <person name="Civerolo E.L."/>
            <person name="Simpson A.J.G."/>
            <person name="Almeida N.F. Jr."/>
            <person name="Setubal J.C."/>
            <person name="Kitajima J.P."/>
        </authorList>
    </citation>
    <scope>NUCLEOTIDE SEQUENCE [LARGE SCALE GENOMIC DNA]</scope>
    <source>
        <strain>Temecula1 / ATCC 700964</strain>
    </source>
</reference>